<proteinExistence type="inferred from homology"/>
<dbReference type="EMBL" id="BX897700">
    <property type="protein sequence ID" value="CAF25948.1"/>
    <property type="molecule type" value="Genomic_DNA"/>
</dbReference>
<dbReference type="RefSeq" id="WP_011179237.1">
    <property type="nucleotide sequence ID" value="NC_005955.1"/>
</dbReference>
<dbReference type="SMR" id="Q6G061"/>
<dbReference type="GeneID" id="56533182"/>
<dbReference type="KEGG" id="bqu:BQ04490"/>
<dbReference type="eggNOG" id="COG0238">
    <property type="taxonomic scope" value="Bacteria"/>
</dbReference>
<dbReference type="HOGENOM" id="CLU_148710_2_2_5"/>
<dbReference type="OrthoDB" id="9812008at2"/>
<dbReference type="Proteomes" id="UP000000597">
    <property type="component" value="Chromosome"/>
</dbReference>
<dbReference type="GO" id="GO:0022627">
    <property type="term" value="C:cytosolic small ribosomal subunit"/>
    <property type="evidence" value="ECO:0007669"/>
    <property type="project" value="TreeGrafter"/>
</dbReference>
<dbReference type="GO" id="GO:0070181">
    <property type="term" value="F:small ribosomal subunit rRNA binding"/>
    <property type="evidence" value="ECO:0007669"/>
    <property type="project" value="TreeGrafter"/>
</dbReference>
<dbReference type="GO" id="GO:0003735">
    <property type="term" value="F:structural constituent of ribosome"/>
    <property type="evidence" value="ECO:0007669"/>
    <property type="project" value="InterPro"/>
</dbReference>
<dbReference type="GO" id="GO:0006412">
    <property type="term" value="P:translation"/>
    <property type="evidence" value="ECO:0007669"/>
    <property type="project" value="UniProtKB-UniRule"/>
</dbReference>
<dbReference type="Gene3D" id="4.10.640.10">
    <property type="entry name" value="Ribosomal protein S18"/>
    <property type="match status" value="1"/>
</dbReference>
<dbReference type="HAMAP" id="MF_00270">
    <property type="entry name" value="Ribosomal_bS18"/>
    <property type="match status" value="1"/>
</dbReference>
<dbReference type="InterPro" id="IPR001648">
    <property type="entry name" value="Ribosomal_bS18"/>
</dbReference>
<dbReference type="InterPro" id="IPR018275">
    <property type="entry name" value="Ribosomal_bS18_CS"/>
</dbReference>
<dbReference type="InterPro" id="IPR036870">
    <property type="entry name" value="Ribosomal_bS18_sf"/>
</dbReference>
<dbReference type="NCBIfam" id="TIGR00165">
    <property type="entry name" value="S18"/>
    <property type="match status" value="1"/>
</dbReference>
<dbReference type="PANTHER" id="PTHR13479">
    <property type="entry name" value="30S RIBOSOMAL PROTEIN S18"/>
    <property type="match status" value="1"/>
</dbReference>
<dbReference type="PANTHER" id="PTHR13479:SF40">
    <property type="entry name" value="SMALL RIBOSOMAL SUBUNIT PROTEIN BS18M"/>
    <property type="match status" value="1"/>
</dbReference>
<dbReference type="Pfam" id="PF01084">
    <property type="entry name" value="Ribosomal_S18"/>
    <property type="match status" value="1"/>
</dbReference>
<dbReference type="PRINTS" id="PR00974">
    <property type="entry name" value="RIBOSOMALS18"/>
</dbReference>
<dbReference type="SUPFAM" id="SSF46911">
    <property type="entry name" value="Ribosomal protein S18"/>
    <property type="match status" value="1"/>
</dbReference>
<dbReference type="PROSITE" id="PS00057">
    <property type="entry name" value="RIBOSOMAL_S18"/>
    <property type="match status" value="1"/>
</dbReference>
<organism>
    <name type="scientific">Bartonella quintana (strain Toulouse)</name>
    <name type="common">Rochalimaea quintana</name>
    <dbReference type="NCBI Taxonomy" id="283165"/>
    <lineage>
        <taxon>Bacteria</taxon>
        <taxon>Pseudomonadati</taxon>
        <taxon>Pseudomonadota</taxon>
        <taxon>Alphaproteobacteria</taxon>
        <taxon>Hyphomicrobiales</taxon>
        <taxon>Bartonellaceae</taxon>
        <taxon>Bartonella</taxon>
    </lineage>
</organism>
<keyword id="KW-0687">Ribonucleoprotein</keyword>
<keyword id="KW-0689">Ribosomal protein</keyword>
<keyword id="KW-0694">RNA-binding</keyword>
<keyword id="KW-0699">rRNA-binding</keyword>
<sequence>MSEINQTVTRRPFHRRRKTCPFSGANAPKIDYKDIKLLQRYISERGKIVPSRITAVSQKRQRELANAIKRARFLGLLPYVIK</sequence>
<gene>
    <name evidence="1" type="primary">rpsR</name>
    <name type="ordered locus">BQ04490</name>
</gene>
<comment type="function">
    <text evidence="1">Binds as a heterodimer with protein bS6 to the central domain of the 16S rRNA, where it helps stabilize the platform of the 30S subunit.</text>
</comment>
<comment type="subunit">
    <text evidence="1">Part of the 30S ribosomal subunit. Forms a tight heterodimer with protein bS6.</text>
</comment>
<comment type="similarity">
    <text evidence="1">Belongs to the bacterial ribosomal protein bS18 family.</text>
</comment>
<accession>Q6G061</accession>
<reference key="1">
    <citation type="journal article" date="2004" name="Proc. Natl. Acad. Sci. U.S.A.">
        <title>The louse-borne human pathogen Bartonella quintana is a genomic derivative of the zoonotic agent Bartonella henselae.</title>
        <authorList>
            <person name="Alsmark U.C.M."/>
            <person name="Frank A.C."/>
            <person name="Karlberg E.O."/>
            <person name="Legault B.-A."/>
            <person name="Ardell D.H."/>
            <person name="Canbaeck B."/>
            <person name="Eriksson A.-S."/>
            <person name="Naeslund A.K."/>
            <person name="Handley S.A."/>
            <person name="Huvet M."/>
            <person name="La Scola B."/>
            <person name="Holmberg M."/>
            <person name="Andersson S.G.E."/>
        </authorList>
    </citation>
    <scope>NUCLEOTIDE SEQUENCE [LARGE SCALE GENOMIC DNA]</scope>
    <source>
        <strain>Toulouse</strain>
    </source>
</reference>
<protein>
    <recommendedName>
        <fullName evidence="1">Small ribosomal subunit protein bS18</fullName>
    </recommendedName>
    <alternativeName>
        <fullName evidence="3">30S ribosomal protein S18</fullName>
    </alternativeName>
</protein>
<name>RS18_BARQU</name>
<feature type="chain" id="PRO_0000111120" description="Small ribosomal subunit protein bS18">
    <location>
        <begin position="1"/>
        <end position="82"/>
    </location>
</feature>
<feature type="region of interest" description="Disordered" evidence="2">
    <location>
        <begin position="1"/>
        <end position="20"/>
    </location>
</feature>
<evidence type="ECO:0000255" key="1">
    <source>
        <dbReference type="HAMAP-Rule" id="MF_00270"/>
    </source>
</evidence>
<evidence type="ECO:0000256" key="2">
    <source>
        <dbReference type="SAM" id="MobiDB-lite"/>
    </source>
</evidence>
<evidence type="ECO:0000305" key="3"/>